<dbReference type="EC" id="1.2.1.41" evidence="1"/>
<dbReference type="EMBL" id="CP001488">
    <property type="protein sequence ID" value="ACO01564.1"/>
    <property type="molecule type" value="Genomic_DNA"/>
</dbReference>
<dbReference type="RefSeq" id="WP_005970771.1">
    <property type="nucleotide sequence ID" value="NC_012441.1"/>
</dbReference>
<dbReference type="SMR" id="C0RF92"/>
<dbReference type="KEGG" id="bmi:BMEA_A1893"/>
<dbReference type="HOGENOM" id="CLU_030231_0_0_5"/>
<dbReference type="UniPathway" id="UPA00098">
    <property type="reaction ID" value="UER00360"/>
</dbReference>
<dbReference type="Proteomes" id="UP000001748">
    <property type="component" value="Chromosome I"/>
</dbReference>
<dbReference type="GO" id="GO:0005737">
    <property type="term" value="C:cytoplasm"/>
    <property type="evidence" value="ECO:0007669"/>
    <property type="project" value="UniProtKB-SubCell"/>
</dbReference>
<dbReference type="GO" id="GO:0004350">
    <property type="term" value="F:glutamate-5-semialdehyde dehydrogenase activity"/>
    <property type="evidence" value="ECO:0007669"/>
    <property type="project" value="UniProtKB-UniRule"/>
</dbReference>
<dbReference type="GO" id="GO:0050661">
    <property type="term" value="F:NADP binding"/>
    <property type="evidence" value="ECO:0007669"/>
    <property type="project" value="InterPro"/>
</dbReference>
<dbReference type="GO" id="GO:0055129">
    <property type="term" value="P:L-proline biosynthetic process"/>
    <property type="evidence" value="ECO:0007669"/>
    <property type="project" value="UniProtKB-UniRule"/>
</dbReference>
<dbReference type="CDD" id="cd07079">
    <property type="entry name" value="ALDH_F18-19_ProA-GPR"/>
    <property type="match status" value="1"/>
</dbReference>
<dbReference type="Gene3D" id="3.40.605.10">
    <property type="entry name" value="Aldehyde Dehydrogenase, Chain A, domain 1"/>
    <property type="match status" value="1"/>
</dbReference>
<dbReference type="Gene3D" id="3.40.309.10">
    <property type="entry name" value="Aldehyde Dehydrogenase, Chain A, domain 2"/>
    <property type="match status" value="1"/>
</dbReference>
<dbReference type="HAMAP" id="MF_00412">
    <property type="entry name" value="ProA"/>
    <property type="match status" value="1"/>
</dbReference>
<dbReference type="InterPro" id="IPR016161">
    <property type="entry name" value="Ald_DH/histidinol_DH"/>
</dbReference>
<dbReference type="InterPro" id="IPR016163">
    <property type="entry name" value="Ald_DH_C"/>
</dbReference>
<dbReference type="InterPro" id="IPR016162">
    <property type="entry name" value="Ald_DH_N"/>
</dbReference>
<dbReference type="InterPro" id="IPR015590">
    <property type="entry name" value="Aldehyde_DH_dom"/>
</dbReference>
<dbReference type="InterPro" id="IPR020593">
    <property type="entry name" value="G-glutamylP_reductase_CS"/>
</dbReference>
<dbReference type="InterPro" id="IPR012134">
    <property type="entry name" value="Glu-5-SA_DH"/>
</dbReference>
<dbReference type="InterPro" id="IPR000965">
    <property type="entry name" value="GPR_dom"/>
</dbReference>
<dbReference type="NCBIfam" id="NF001221">
    <property type="entry name" value="PRK00197.1"/>
    <property type="match status" value="1"/>
</dbReference>
<dbReference type="NCBIfam" id="TIGR00407">
    <property type="entry name" value="proA"/>
    <property type="match status" value="1"/>
</dbReference>
<dbReference type="PANTHER" id="PTHR11063:SF8">
    <property type="entry name" value="DELTA-1-PYRROLINE-5-CARBOXYLATE SYNTHASE"/>
    <property type="match status" value="1"/>
</dbReference>
<dbReference type="PANTHER" id="PTHR11063">
    <property type="entry name" value="GLUTAMATE SEMIALDEHYDE DEHYDROGENASE"/>
    <property type="match status" value="1"/>
</dbReference>
<dbReference type="Pfam" id="PF00171">
    <property type="entry name" value="Aldedh"/>
    <property type="match status" value="1"/>
</dbReference>
<dbReference type="PIRSF" id="PIRSF000151">
    <property type="entry name" value="GPR"/>
    <property type="match status" value="1"/>
</dbReference>
<dbReference type="SUPFAM" id="SSF53720">
    <property type="entry name" value="ALDH-like"/>
    <property type="match status" value="1"/>
</dbReference>
<dbReference type="PROSITE" id="PS01223">
    <property type="entry name" value="PROA"/>
    <property type="match status" value="1"/>
</dbReference>
<gene>
    <name evidence="1" type="primary">proA</name>
    <name type="ordered locus">BMEA_A1893</name>
</gene>
<protein>
    <recommendedName>
        <fullName evidence="1">Gamma-glutamyl phosphate reductase</fullName>
        <shortName evidence="1">GPR</shortName>
        <ecNumber evidence="1">1.2.1.41</ecNumber>
    </recommendedName>
    <alternativeName>
        <fullName evidence="1">Glutamate-5-semialdehyde dehydrogenase</fullName>
    </alternativeName>
    <alternativeName>
        <fullName evidence="1">Glutamyl-gamma-semialdehyde dehydrogenase</fullName>
        <shortName evidence="1">GSA dehydrogenase</shortName>
    </alternativeName>
</protein>
<sequence length="427" mass="44725">MLVKADMTKDIAQVMAEVGRKAKAAAAPLSIATSEQKNKALNAAADAILEARADILEANRLDLANAEKNGMAASFVDRLTLNEARIDAIAEGIRAIATLPDPVGEVIAEWDRPNGLHIERVRTPLGVIGVIYESRPNVTADAGALCLKAGNAVILRGGSDSAHSSAAIYKALVKGLEAANLPADAIQIVPVTDRAAVGEMLKGLGGAIDVIVPRGGKSLVARVQSEARVPVFAHLEGICHLYIDKSADLDMARRIALDAKMRRTGICGAAETLLVDRAVASTHLAPILGDLAAGGCEIRGSAEVLALYPAAKPATEEDWSTEYLDAIISVALVDGISGAIDHINRYSSHHTEAIVAEDAQTVARFFNEIDSAILLHNASTQFADGGEFGMGAEIGIATGKMHARGPVGVEQLTSFKYRVRGSGQVRG</sequence>
<name>PROA_BRUMB</name>
<proteinExistence type="inferred from homology"/>
<comment type="function">
    <text evidence="1">Catalyzes the NADPH-dependent reduction of L-glutamate 5-phosphate into L-glutamate 5-semialdehyde and phosphate. The product spontaneously undergoes cyclization to form 1-pyrroline-5-carboxylate.</text>
</comment>
<comment type="catalytic activity">
    <reaction evidence="1">
        <text>L-glutamate 5-semialdehyde + phosphate + NADP(+) = L-glutamyl 5-phosphate + NADPH + H(+)</text>
        <dbReference type="Rhea" id="RHEA:19541"/>
        <dbReference type="ChEBI" id="CHEBI:15378"/>
        <dbReference type="ChEBI" id="CHEBI:43474"/>
        <dbReference type="ChEBI" id="CHEBI:57783"/>
        <dbReference type="ChEBI" id="CHEBI:58066"/>
        <dbReference type="ChEBI" id="CHEBI:58274"/>
        <dbReference type="ChEBI" id="CHEBI:58349"/>
        <dbReference type="EC" id="1.2.1.41"/>
    </reaction>
</comment>
<comment type="pathway">
    <text evidence="1">Amino-acid biosynthesis; L-proline biosynthesis; L-glutamate 5-semialdehyde from L-glutamate: step 2/2.</text>
</comment>
<comment type="subcellular location">
    <subcellularLocation>
        <location evidence="1">Cytoplasm</location>
    </subcellularLocation>
</comment>
<comment type="similarity">
    <text evidence="1">Belongs to the gamma-glutamyl phosphate reductase family.</text>
</comment>
<accession>C0RF92</accession>
<organism>
    <name type="scientific">Brucella melitensis biotype 2 (strain ATCC 23457)</name>
    <dbReference type="NCBI Taxonomy" id="546272"/>
    <lineage>
        <taxon>Bacteria</taxon>
        <taxon>Pseudomonadati</taxon>
        <taxon>Pseudomonadota</taxon>
        <taxon>Alphaproteobacteria</taxon>
        <taxon>Hyphomicrobiales</taxon>
        <taxon>Brucellaceae</taxon>
        <taxon>Brucella/Ochrobactrum group</taxon>
        <taxon>Brucella</taxon>
    </lineage>
</organism>
<keyword id="KW-0028">Amino-acid biosynthesis</keyword>
<keyword id="KW-0963">Cytoplasm</keyword>
<keyword id="KW-0521">NADP</keyword>
<keyword id="KW-0560">Oxidoreductase</keyword>
<keyword id="KW-0641">Proline biosynthesis</keyword>
<evidence type="ECO:0000255" key="1">
    <source>
        <dbReference type="HAMAP-Rule" id="MF_00412"/>
    </source>
</evidence>
<reference key="1">
    <citation type="submission" date="2009-03" db="EMBL/GenBank/DDBJ databases">
        <title>Brucella melitensis ATCC 23457 whole genome shotgun sequencing project.</title>
        <authorList>
            <person name="Setubal J.C."/>
            <person name="Boyle S."/>
            <person name="Crasta O.R."/>
            <person name="Gillespie J.J."/>
            <person name="Kenyon R.W."/>
            <person name="Lu J."/>
            <person name="Mane S."/>
            <person name="Nagrani S."/>
            <person name="Shallom J.M."/>
            <person name="Shallom S."/>
            <person name="Shukla M."/>
            <person name="Snyder E.E."/>
            <person name="Sobral B.W."/>
            <person name="Wattam A.R."/>
            <person name="Will R."/>
            <person name="Williams K."/>
            <person name="Yoo H."/>
            <person name="Munk C."/>
            <person name="Tapia R."/>
            <person name="Han C."/>
            <person name="Detter J.C."/>
            <person name="Bruce D."/>
            <person name="Brettin T.S."/>
        </authorList>
    </citation>
    <scope>NUCLEOTIDE SEQUENCE [LARGE SCALE GENOMIC DNA]</scope>
    <source>
        <strain>ATCC 23457</strain>
    </source>
</reference>
<feature type="chain" id="PRO_1000193576" description="Gamma-glutamyl phosphate reductase">
    <location>
        <begin position="1"/>
        <end position="427"/>
    </location>
</feature>